<feature type="chain" id="PRO_0000368433" description="ATP synthase subunit b">
    <location>
        <begin position="1"/>
        <end position="187"/>
    </location>
</feature>
<feature type="transmembrane region" description="Helical" evidence="1">
    <location>
        <begin position="31"/>
        <end position="51"/>
    </location>
</feature>
<evidence type="ECO:0000255" key="1">
    <source>
        <dbReference type="HAMAP-Rule" id="MF_01398"/>
    </source>
</evidence>
<evidence type="ECO:0000305" key="2"/>
<organism>
    <name type="scientific">Lachnoclostridium phytofermentans (strain ATCC 700394 / DSM 18823 / ISDg)</name>
    <name type="common">Clostridium phytofermentans</name>
    <dbReference type="NCBI Taxonomy" id="357809"/>
    <lineage>
        <taxon>Bacteria</taxon>
        <taxon>Bacillati</taxon>
        <taxon>Bacillota</taxon>
        <taxon>Clostridia</taxon>
        <taxon>Lachnospirales</taxon>
        <taxon>Lachnospiraceae</taxon>
    </lineage>
</organism>
<name>ATPF_LACP7</name>
<keyword id="KW-0066">ATP synthesis</keyword>
<keyword id="KW-1003">Cell membrane</keyword>
<keyword id="KW-0138">CF(0)</keyword>
<keyword id="KW-0375">Hydrogen ion transport</keyword>
<keyword id="KW-0406">Ion transport</keyword>
<keyword id="KW-0472">Membrane</keyword>
<keyword id="KW-1185">Reference proteome</keyword>
<keyword id="KW-0812">Transmembrane</keyword>
<keyword id="KW-1133">Transmembrane helix</keyword>
<keyword id="KW-0813">Transport</keyword>
<comment type="function">
    <text evidence="1">F(1)F(0) ATP synthase produces ATP from ADP in the presence of a proton or sodium gradient. F-type ATPases consist of two structural domains, F(1) containing the extramembraneous catalytic core and F(0) containing the membrane proton channel, linked together by a central stalk and a peripheral stalk. During catalysis, ATP synthesis in the catalytic domain of F(1) is coupled via a rotary mechanism of the central stalk subunits to proton translocation.</text>
</comment>
<comment type="function">
    <text evidence="1">Component of the F(0) channel, it forms part of the peripheral stalk, linking F(1) to F(0).</text>
</comment>
<comment type="subunit">
    <text evidence="1">F-type ATPases have 2 components, F(1) - the catalytic core - and F(0) - the membrane proton channel. F(1) has five subunits: alpha(3), beta(3), gamma(1), delta(1), epsilon(1). F(0) has three main subunits: a(1), b(2) and c(10-14). The alpha and beta chains form an alternating ring which encloses part of the gamma chain. F(1) is attached to F(0) by a central stalk formed by the gamma and epsilon chains, while a peripheral stalk is formed by the delta and b chains.</text>
</comment>
<comment type="subcellular location">
    <subcellularLocation>
        <location evidence="1">Cell membrane</location>
        <topology evidence="1">Single-pass membrane protein</topology>
    </subcellularLocation>
</comment>
<comment type="similarity">
    <text evidence="1">Belongs to the ATPase B chain family.</text>
</comment>
<comment type="sequence caution" evidence="2">
    <conflict type="erroneous initiation">
        <sequence resource="EMBL-CDS" id="ABX44087"/>
    </conflict>
</comment>
<reference key="1">
    <citation type="submission" date="2007-11" db="EMBL/GenBank/DDBJ databases">
        <title>Complete genome sequence of Clostridium phytofermentans ISDg.</title>
        <authorList>
            <person name="Leschine S.B."/>
            <person name="Warnick T.A."/>
            <person name="Blanchard J.L."/>
            <person name="Schnell D.J."/>
            <person name="Petit E.L."/>
            <person name="LaTouf W.G."/>
            <person name="Copeland A."/>
            <person name="Lucas S."/>
            <person name="Lapidus A."/>
            <person name="Barry K."/>
            <person name="Glavina del Rio T."/>
            <person name="Dalin E."/>
            <person name="Tice H."/>
            <person name="Pitluck S."/>
            <person name="Kiss H."/>
            <person name="Brettin T."/>
            <person name="Bruce D."/>
            <person name="Detter J.C."/>
            <person name="Han C."/>
            <person name="Kuske C."/>
            <person name="Schmutz J."/>
            <person name="Larimer F."/>
            <person name="Land M."/>
            <person name="Hauser L."/>
            <person name="Kyrpides N."/>
            <person name="Kim E.A."/>
            <person name="Richardson P."/>
        </authorList>
    </citation>
    <scope>NUCLEOTIDE SEQUENCE [LARGE SCALE GENOMIC DNA]</scope>
    <source>
        <strain>ATCC 700394 / DSM 18823 / ISDg</strain>
    </source>
</reference>
<sequence>MYSTTVLATGTKDTSLVNRIFGLDMQLVVDVAIMGLAIFVLFLILSYLLFNPARELLQKRQDRIKEEMDSSAKDKKEATQLKTNYEAKIKEASKEVDEILSEGRKKALKRENDIVDEAKVEASRIVDRANKEIELNKSKMKDEVKQEMIAVASVMAGKIIAGNIDETKQKQLIDEALNEMGDETWQN</sequence>
<proteinExistence type="inferred from homology"/>
<accession>A9KK96</accession>
<dbReference type="EMBL" id="CP000885">
    <property type="protein sequence ID" value="ABX44087.1"/>
    <property type="status" value="ALT_INIT"/>
    <property type="molecule type" value="Genomic_DNA"/>
</dbReference>
<dbReference type="SMR" id="A9KK96"/>
<dbReference type="STRING" id="357809.Cphy_3740"/>
<dbReference type="KEGG" id="cpy:Cphy_3740"/>
<dbReference type="eggNOG" id="COG0711">
    <property type="taxonomic scope" value="Bacteria"/>
</dbReference>
<dbReference type="HOGENOM" id="CLU_079215_4_0_9"/>
<dbReference type="OrthoDB" id="1766706at2"/>
<dbReference type="Proteomes" id="UP000000370">
    <property type="component" value="Chromosome"/>
</dbReference>
<dbReference type="GO" id="GO:0005886">
    <property type="term" value="C:plasma membrane"/>
    <property type="evidence" value="ECO:0007669"/>
    <property type="project" value="UniProtKB-SubCell"/>
</dbReference>
<dbReference type="GO" id="GO:0045259">
    <property type="term" value="C:proton-transporting ATP synthase complex"/>
    <property type="evidence" value="ECO:0007669"/>
    <property type="project" value="UniProtKB-KW"/>
</dbReference>
<dbReference type="GO" id="GO:0046933">
    <property type="term" value="F:proton-transporting ATP synthase activity, rotational mechanism"/>
    <property type="evidence" value="ECO:0007669"/>
    <property type="project" value="UniProtKB-UniRule"/>
</dbReference>
<dbReference type="GO" id="GO:0046961">
    <property type="term" value="F:proton-transporting ATPase activity, rotational mechanism"/>
    <property type="evidence" value="ECO:0007669"/>
    <property type="project" value="TreeGrafter"/>
</dbReference>
<dbReference type="CDD" id="cd06503">
    <property type="entry name" value="ATP-synt_Fo_b"/>
    <property type="match status" value="1"/>
</dbReference>
<dbReference type="Gene3D" id="1.20.5.620">
    <property type="entry name" value="F1F0 ATP synthase subunit B, membrane domain"/>
    <property type="match status" value="1"/>
</dbReference>
<dbReference type="HAMAP" id="MF_01398">
    <property type="entry name" value="ATP_synth_b_bprime"/>
    <property type="match status" value="1"/>
</dbReference>
<dbReference type="InterPro" id="IPR028987">
    <property type="entry name" value="ATP_synth_B-like_membr_sf"/>
</dbReference>
<dbReference type="InterPro" id="IPR002146">
    <property type="entry name" value="ATP_synth_b/b'su_bac/chlpt"/>
</dbReference>
<dbReference type="InterPro" id="IPR005864">
    <property type="entry name" value="ATP_synth_F0_bsu_bac"/>
</dbReference>
<dbReference type="InterPro" id="IPR050059">
    <property type="entry name" value="ATP_synthase_B_chain"/>
</dbReference>
<dbReference type="NCBIfam" id="TIGR01144">
    <property type="entry name" value="ATP_synt_b"/>
    <property type="match status" value="1"/>
</dbReference>
<dbReference type="PANTHER" id="PTHR33445:SF1">
    <property type="entry name" value="ATP SYNTHASE SUBUNIT B"/>
    <property type="match status" value="1"/>
</dbReference>
<dbReference type="PANTHER" id="PTHR33445">
    <property type="entry name" value="ATP SYNTHASE SUBUNIT B', CHLOROPLASTIC"/>
    <property type="match status" value="1"/>
</dbReference>
<dbReference type="Pfam" id="PF00430">
    <property type="entry name" value="ATP-synt_B"/>
    <property type="match status" value="1"/>
</dbReference>
<dbReference type="SUPFAM" id="SSF81573">
    <property type="entry name" value="F1F0 ATP synthase subunit B, membrane domain"/>
    <property type="match status" value="1"/>
</dbReference>
<protein>
    <recommendedName>
        <fullName evidence="1">ATP synthase subunit b</fullName>
    </recommendedName>
    <alternativeName>
        <fullName evidence="1">ATP synthase F(0) sector subunit b</fullName>
    </alternativeName>
    <alternativeName>
        <fullName evidence="1">ATPase subunit I</fullName>
    </alternativeName>
    <alternativeName>
        <fullName evidence="1">F-type ATPase subunit b</fullName>
        <shortName evidence="1">F-ATPase subunit b</shortName>
    </alternativeName>
</protein>
<gene>
    <name evidence="1" type="primary">atpF</name>
    <name type="ordered locus">Cphy_3740</name>
</gene>